<proteinExistence type="inferred from homology"/>
<comment type="function">
    <text evidence="2">RNA-binding component of the eukaryotic translation initiation factor 3 (eIF-3) complex, which is involved in protein synthesis of a specialized repertoire of mRNAs and, together with other initiation factors, stimulates binding of mRNA and methionyl-tRNAi to the 40S ribosome. The eIF-3 complex specifically targets and initiates translation of a subset of mRNAs involved in cell proliferation. This subunit can bind 18S rRNA.</text>
</comment>
<comment type="subunit">
    <text evidence="2">Component of the eukaryotic translation initiation factor 3 (eIF-3) complex. The eIF-3 complex interacts with pix.</text>
</comment>
<comment type="subcellular location">
    <subcellularLocation>
        <location evidence="2">Cytoplasm</location>
    </subcellularLocation>
</comment>
<comment type="similarity">
    <text evidence="2">Belongs to the eIF-3 subunit G family.</text>
</comment>
<feature type="chain" id="PRO_0000365429" description="Eukaryotic translation initiation factor 3 subunit G-1">
    <location>
        <begin position="1"/>
        <end position="269"/>
    </location>
</feature>
<feature type="domain" description="RRM" evidence="2">
    <location>
        <begin position="188"/>
        <end position="266"/>
    </location>
</feature>
<accession>B4Q0Y7</accession>
<sequence length="269" mass="29951">MPGVETIKSSWADEVELDYGGLPPTTETVENGHKYVTEYKYNKDDKKTKVVRTYKISKQVVPKTVAKRRTWTKFGESKNDKPGPNSQTTMVSEEIIMQFLNSKEDEKANDPLLDPTKNIAKCRICNGEHWSVNCPYKGTAMDTNLMEKKASAAAAAAVDAPKSGKYVPPFLKDSQKGALGMRGRDDTAAIRISNLSESMTEADLEELVKKIGPQSKMYLARDKNTGLCKGFAYVHFKQRKDAAAAIEILNGHGYDHLILSVEWSKPQNN</sequence>
<dbReference type="EMBL" id="CM000162">
    <property type="protein sequence ID" value="EDX01354.1"/>
    <property type="molecule type" value="Genomic_DNA"/>
</dbReference>
<dbReference type="SMR" id="B4Q0Y7"/>
<dbReference type="EnsemblMetazoa" id="FBtr0263454">
    <property type="protein sequence ID" value="FBpp0261946"/>
    <property type="gene ID" value="FBgn0234424"/>
</dbReference>
<dbReference type="EnsemblMetazoa" id="XM_002100210.3">
    <property type="protein sequence ID" value="XP_002100246.1"/>
    <property type="gene ID" value="LOC6524388"/>
</dbReference>
<dbReference type="GeneID" id="6524388"/>
<dbReference type="KEGG" id="dya:Dyak_GE16936"/>
<dbReference type="CTD" id="31243"/>
<dbReference type="eggNOG" id="KOG0122">
    <property type="taxonomic scope" value="Eukaryota"/>
</dbReference>
<dbReference type="HOGENOM" id="CLU_034595_0_0_1"/>
<dbReference type="OMA" id="ICQGDHF"/>
<dbReference type="OrthoDB" id="639027at2759"/>
<dbReference type="PhylomeDB" id="B4Q0Y7"/>
<dbReference type="Proteomes" id="UP000002282">
    <property type="component" value="Chromosome X"/>
</dbReference>
<dbReference type="GO" id="GO:0016282">
    <property type="term" value="C:eukaryotic 43S preinitiation complex"/>
    <property type="evidence" value="ECO:0007669"/>
    <property type="project" value="UniProtKB-UniRule"/>
</dbReference>
<dbReference type="GO" id="GO:0033290">
    <property type="term" value="C:eukaryotic 48S preinitiation complex"/>
    <property type="evidence" value="ECO:0007669"/>
    <property type="project" value="UniProtKB-UniRule"/>
</dbReference>
<dbReference type="GO" id="GO:0005852">
    <property type="term" value="C:eukaryotic translation initiation factor 3 complex"/>
    <property type="evidence" value="ECO:0007669"/>
    <property type="project" value="UniProtKB-UniRule"/>
</dbReference>
<dbReference type="GO" id="GO:0003723">
    <property type="term" value="F:RNA binding"/>
    <property type="evidence" value="ECO:0007669"/>
    <property type="project" value="UniProtKB-UniRule"/>
</dbReference>
<dbReference type="GO" id="GO:0003743">
    <property type="term" value="F:translation initiation factor activity"/>
    <property type="evidence" value="ECO:0007669"/>
    <property type="project" value="UniProtKB-UniRule"/>
</dbReference>
<dbReference type="GO" id="GO:0001732">
    <property type="term" value="P:formation of cytoplasmic translation initiation complex"/>
    <property type="evidence" value="ECO:0007669"/>
    <property type="project" value="UniProtKB-UniRule"/>
</dbReference>
<dbReference type="CDD" id="cd12933">
    <property type="entry name" value="eIF3G"/>
    <property type="match status" value="1"/>
</dbReference>
<dbReference type="CDD" id="cd12408">
    <property type="entry name" value="RRM_eIF3G_like"/>
    <property type="match status" value="1"/>
</dbReference>
<dbReference type="FunFam" id="3.30.70.330:FF:000828">
    <property type="entry name" value="Eukaryotic translation initiation factor 3 subunit G"/>
    <property type="match status" value="1"/>
</dbReference>
<dbReference type="Gene3D" id="3.30.70.330">
    <property type="match status" value="1"/>
</dbReference>
<dbReference type="HAMAP" id="MF_03006">
    <property type="entry name" value="eIF3g"/>
    <property type="match status" value="1"/>
</dbReference>
<dbReference type="InterPro" id="IPR017334">
    <property type="entry name" value="eIF3_g"/>
</dbReference>
<dbReference type="InterPro" id="IPR024675">
    <property type="entry name" value="eIF3g_N"/>
</dbReference>
<dbReference type="InterPro" id="IPR034240">
    <property type="entry name" value="eIF3G_RRM"/>
</dbReference>
<dbReference type="InterPro" id="IPR012677">
    <property type="entry name" value="Nucleotide-bd_a/b_plait_sf"/>
</dbReference>
<dbReference type="InterPro" id="IPR035979">
    <property type="entry name" value="RBD_domain_sf"/>
</dbReference>
<dbReference type="InterPro" id="IPR000504">
    <property type="entry name" value="RRM_dom"/>
</dbReference>
<dbReference type="PANTHER" id="PTHR10352">
    <property type="entry name" value="EUKARYOTIC TRANSLATION INITIATION FACTOR 3 SUBUNIT G"/>
    <property type="match status" value="1"/>
</dbReference>
<dbReference type="Pfam" id="PF12353">
    <property type="entry name" value="eIF3g"/>
    <property type="match status" value="1"/>
</dbReference>
<dbReference type="Pfam" id="PF00076">
    <property type="entry name" value="RRM_1"/>
    <property type="match status" value="1"/>
</dbReference>
<dbReference type="PIRSF" id="PIRSF037949">
    <property type="entry name" value="Transl_init_eIF-3_RNA-bind"/>
    <property type="match status" value="1"/>
</dbReference>
<dbReference type="SMART" id="SM00360">
    <property type="entry name" value="RRM"/>
    <property type="match status" value="1"/>
</dbReference>
<dbReference type="SUPFAM" id="SSF54928">
    <property type="entry name" value="RNA-binding domain, RBD"/>
    <property type="match status" value="1"/>
</dbReference>
<dbReference type="PROSITE" id="PS50102">
    <property type="entry name" value="RRM"/>
    <property type="match status" value="1"/>
</dbReference>
<gene>
    <name evidence="1" type="primary">eIF3g1</name>
    <name evidence="2" type="synonym">eIF3-S4</name>
    <name evidence="1" type="synonym">eIF3ga</name>
    <name type="ORF">GE16936</name>
</gene>
<name>EI3G1_DROYA</name>
<organism>
    <name type="scientific">Drosophila yakuba</name>
    <name type="common">Fruit fly</name>
    <dbReference type="NCBI Taxonomy" id="7245"/>
    <lineage>
        <taxon>Eukaryota</taxon>
        <taxon>Metazoa</taxon>
        <taxon>Ecdysozoa</taxon>
        <taxon>Arthropoda</taxon>
        <taxon>Hexapoda</taxon>
        <taxon>Insecta</taxon>
        <taxon>Pterygota</taxon>
        <taxon>Neoptera</taxon>
        <taxon>Endopterygota</taxon>
        <taxon>Diptera</taxon>
        <taxon>Brachycera</taxon>
        <taxon>Muscomorpha</taxon>
        <taxon>Ephydroidea</taxon>
        <taxon>Drosophilidae</taxon>
        <taxon>Drosophila</taxon>
        <taxon>Sophophora</taxon>
    </lineage>
</organism>
<keyword id="KW-0963">Cytoplasm</keyword>
<keyword id="KW-0396">Initiation factor</keyword>
<keyword id="KW-0648">Protein biosynthesis</keyword>
<keyword id="KW-0694">RNA-binding</keyword>
<reference key="1">
    <citation type="journal article" date="2007" name="Nature">
        <title>Evolution of genes and genomes on the Drosophila phylogeny.</title>
        <authorList>
            <consortium name="Drosophila 12 genomes consortium"/>
        </authorList>
    </citation>
    <scope>NUCLEOTIDE SEQUENCE [LARGE SCALE GENOMIC DNA]</scope>
    <source>
        <strain>Tai18E2 / Tucson 14021-0261.01</strain>
    </source>
</reference>
<protein>
    <recommendedName>
        <fullName evidence="1">Eukaryotic translation initiation factor 3 subunit G-1</fullName>
    </recommendedName>
    <alternativeName>
        <fullName evidence="2">Eukaryotic translation initiation factor 3 RNA-binding subunit 1</fullName>
        <shortName evidence="2">eIF-3 RNA-binding subunit 1</shortName>
    </alternativeName>
    <alternativeName>
        <fullName evidence="2">Eukaryotic translation initiation factor 3 subunit 4-1</fullName>
    </alternativeName>
</protein>
<evidence type="ECO:0000250" key="1">
    <source>
        <dbReference type="UniProtKB" id="Q9W4X7"/>
    </source>
</evidence>
<evidence type="ECO:0000255" key="2">
    <source>
        <dbReference type="HAMAP-Rule" id="MF_03006"/>
    </source>
</evidence>